<evidence type="ECO:0000255" key="1">
    <source>
        <dbReference type="HAMAP-Rule" id="MF_00041"/>
    </source>
</evidence>
<protein>
    <recommendedName>
        <fullName evidence="1">Cysteine--tRNA ligase</fullName>
        <ecNumber evidence="1">6.1.1.16</ecNumber>
    </recommendedName>
    <alternativeName>
        <fullName evidence="1">Cysteinyl-tRNA synthetase</fullName>
        <shortName evidence="1">CysRS</shortName>
    </alternativeName>
</protein>
<feature type="chain" id="PRO_1000090811" description="Cysteine--tRNA ligase">
    <location>
        <begin position="1"/>
        <end position="473"/>
    </location>
</feature>
<feature type="short sequence motif" description="'HIGH' region">
    <location>
        <begin position="32"/>
        <end position="42"/>
    </location>
</feature>
<feature type="short sequence motif" description="'KMSKS' region">
    <location>
        <begin position="270"/>
        <end position="274"/>
    </location>
</feature>
<feature type="binding site" evidence="1">
    <location>
        <position position="30"/>
    </location>
    <ligand>
        <name>Zn(2+)</name>
        <dbReference type="ChEBI" id="CHEBI:29105"/>
    </ligand>
</feature>
<feature type="binding site" evidence="1">
    <location>
        <position position="213"/>
    </location>
    <ligand>
        <name>Zn(2+)</name>
        <dbReference type="ChEBI" id="CHEBI:29105"/>
    </ligand>
</feature>
<feature type="binding site" evidence="1">
    <location>
        <position position="238"/>
    </location>
    <ligand>
        <name>Zn(2+)</name>
        <dbReference type="ChEBI" id="CHEBI:29105"/>
    </ligand>
</feature>
<feature type="binding site" evidence="1">
    <location>
        <position position="242"/>
    </location>
    <ligand>
        <name>Zn(2+)</name>
        <dbReference type="ChEBI" id="CHEBI:29105"/>
    </ligand>
</feature>
<feature type="binding site" evidence="1">
    <location>
        <position position="273"/>
    </location>
    <ligand>
        <name>ATP</name>
        <dbReference type="ChEBI" id="CHEBI:30616"/>
    </ligand>
</feature>
<reference key="1">
    <citation type="journal article" date="2008" name="PLoS ONE">
        <title>Comparative analysis of Acinetobacters: three genomes for three lifestyles.</title>
        <authorList>
            <person name="Vallenet D."/>
            <person name="Nordmann P."/>
            <person name="Barbe V."/>
            <person name="Poirel L."/>
            <person name="Mangenot S."/>
            <person name="Bataille E."/>
            <person name="Dossat C."/>
            <person name="Gas S."/>
            <person name="Kreimeyer A."/>
            <person name="Lenoble P."/>
            <person name="Oztas S."/>
            <person name="Poulain J."/>
            <person name="Segurens B."/>
            <person name="Robert C."/>
            <person name="Abergel C."/>
            <person name="Claverie J.-M."/>
            <person name="Raoult D."/>
            <person name="Medigue C."/>
            <person name="Weissenbach J."/>
            <person name="Cruveiller S."/>
        </authorList>
    </citation>
    <scope>NUCLEOTIDE SEQUENCE [LARGE SCALE GENOMIC DNA]</scope>
    <source>
        <strain>AYE</strain>
    </source>
</reference>
<comment type="catalytic activity">
    <reaction evidence="1">
        <text>tRNA(Cys) + L-cysteine + ATP = L-cysteinyl-tRNA(Cys) + AMP + diphosphate</text>
        <dbReference type="Rhea" id="RHEA:17773"/>
        <dbReference type="Rhea" id="RHEA-COMP:9661"/>
        <dbReference type="Rhea" id="RHEA-COMP:9679"/>
        <dbReference type="ChEBI" id="CHEBI:30616"/>
        <dbReference type="ChEBI" id="CHEBI:33019"/>
        <dbReference type="ChEBI" id="CHEBI:35235"/>
        <dbReference type="ChEBI" id="CHEBI:78442"/>
        <dbReference type="ChEBI" id="CHEBI:78517"/>
        <dbReference type="ChEBI" id="CHEBI:456215"/>
        <dbReference type="EC" id="6.1.1.16"/>
    </reaction>
</comment>
<comment type="cofactor">
    <cofactor evidence="1">
        <name>Zn(2+)</name>
        <dbReference type="ChEBI" id="CHEBI:29105"/>
    </cofactor>
    <text evidence="1">Binds 1 zinc ion per subunit.</text>
</comment>
<comment type="subunit">
    <text evidence="1">Monomer.</text>
</comment>
<comment type="subcellular location">
    <subcellularLocation>
        <location evidence="1">Cytoplasm</location>
    </subcellularLocation>
</comment>
<comment type="similarity">
    <text evidence="1">Belongs to the class-I aminoacyl-tRNA synthetase family.</text>
</comment>
<proteinExistence type="inferred from homology"/>
<organism>
    <name type="scientific">Acinetobacter baumannii (strain AYE)</name>
    <dbReference type="NCBI Taxonomy" id="509173"/>
    <lineage>
        <taxon>Bacteria</taxon>
        <taxon>Pseudomonadati</taxon>
        <taxon>Pseudomonadota</taxon>
        <taxon>Gammaproteobacteria</taxon>
        <taxon>Moraxellales</taxon>
        <taxon>Moraxellaceae</taxon>
        <taxon>Acinetobacter</taxon>
        <taxon>Acinetobacter calcoaceticus/baumannii complex</taxon>
    </lineage>
</organism>
<dbReference type="EC" id="6.1.1.16" evidence="1"/>
<dbReference type="EMBL" id="CU459141">
    <property type="protein sequence ID" value="CAM87336.1"/>
    <property type="molecule type" value="Genomic_DNA"/>
</dbReference>
<dbReference type="RefSeq" id="WP_001182272.1">
    <property type="nucleotide sequence ID" value="NZ_JBDGFB010000007.1"/>
</dbReference>
<dbReference type="SMR" id="B0VAU1"/>
<dbReference type="EnsemblBacteria" id="CAM87336">
    <property type="protein sequence ID" value="CAM87336"/>
    <property type="gene ID" value="ABAYE2493"/>
</dbReference>
<dbReference type="KEGG" id="aby:ABAYE2493"/>
<dbReference type="HOGENOM" id="CLU_013528_0_1_6"/>
<dbReference type="GO" id="GO:0005829">
    <property type="term" value="C:cytosol"/>
    <property type="evidence" value="ECO:0007669"/>
    <property type="project" value="TreeGrafter"/>
</dbReference>
<dbReference type="GO" id="GO:0005524">
    <property type="term" value="F:ATP binding"/>
    <property type="evidence" value="ECO:0007669"/>
    <property type="project" value="UniProtKB-UniRule"/>
</dbReference>
<dbReference type="GO" id="GO:0004817">
    <property type="term" value="F:cysteine-tRNA ligase activity"/>
    <property type="evidence" value="ECO:0007669"/>
    <property type="project" value="UniProtKB-UniRule"/>
</dbReference>
<dbReference type="GO" id="GO:0008270">
    <property type="term" value="F:zinc ion binding"/>
    <property type="evidence" value="ECO:0007669"/>
    <property type="project" value="UniProtKB-UniRule"/>
</dbReference>
<dbReference type="GO" id="GO:0006423">
    <property type="term" value="P:cysteinyl-tRNA aminoacylation"/>
    <property type="evidence" value="ECO:0007669"/>
    <property type="project" value="UniProtKB-UniRule"/>
</dbReference>
<dbReference type="CDD" id="cd07963">
    <property type="entry name" value="Anticodon_Ia_Cys"/>
    <property type="match status" value="1"/>
</dbReference>
<dbReference type="CDD" id="cd00672">
    <property type="entry name" value="CysRS_core"/>
    <property type="match status" value="1"/>
</dbReference>
<dbReference type="FunFam" id="3.40.50.620:FF:000009">
    <property type="entry name" value="Cysteine--tRNA ligase"/>
    <property type="match status" value="1"/>
</dbReference>
<dbReference type="Gene3D" id="1.20.120.1910">
    <property type="entry name" value="Cysteine-tRNA ligase, C-terminal anti-codon recognition domain"/>
    <property type="match status" value="1"/>
</dbReference>
<dbReference type="Gene3D" id="3.40.50.620">
    <property type="entry name" value="HUPs"/>
    <property type="match status" value="1"/>
</dbReference>
<dbReference type="HAMAP" id="MF_00041">
    <property type="entry name" value="Cys_tRNA_synth"/>
    <property type="match status" value="1"/>
</dbReference>
<dbReference type="InterPro" id="IPR015803">
    <property type="entry name" value="Cys-tRNA-ligase"/>
</dbReference>
<dbReference type="InterPro" id="IPR015273">
    <property type="entry name" value="Cys-tRNA-synt_Ia_DALR"/>
</dbReference>
<dbReference type="InterPro" id="IPR024909">
    <property type="entry name" value="Cys-tRNA/MSH_ligase"/>
</dbReference>
<dbReference type="InterPro" id="IPR014729">
    <property type="entry name" value="Rossmann-like_a/b/a_fold"/>
</dbReference>
<dbReference type="InterPro" id="IPR032678">
    <property type="entry name" value="tRNA-synt_1_cat_dom"/>
</dbReference>
<dbReference type="InterPro" id="IPR009080">
    <property type="entry name" value="tRNAsynth_Ia_anticodon-bd"/>
</dbReference>
<dbReference type="NCBIfam" id="TIGR00435">
    <property type="entry name" value="cysS"/>
    <property type="match status" value="1"/>
</dbReference>
<dbReference type="PANTHER" id="PTHR10890:SF3">
    <property type="entry name" value="CYSTEINE--TRNA LIGASE, CYTOPLASMIC"/>
    <property type="match status" value="1"/>
</dbReference>
<dbReference type="PANTHER" id="PTHR10890">
    <property type="entry name" value="CYSTEINYL-TRNA SYNTHETASE"/>
    <property type="match status" value="1"/>
</dbReference>
<dbReference type="Pfam" id="PF09190">
    <property type="entry name" value="DALR_2"/>
    <property type="match status" value="1"/>
</dbReference>
<dbReference type="Pfam" id="PF01406">
    <property type="entry name" value="tRNA-synt_1e"/>
    <property type="match status" value="1"/>
</dbReference>
<dbReference type="PRINTS" id="PR00983">
    <property type="entry name" value="TRNASYNTHCYS"/>
</dbReference>
<dbReference type="SMART" id="SM00840">
    <property type="entry name" value="DALR_2"/>
    <property type="match status" value="1"/>
</dbReference>
<dbReference type="SUPFAM" id="SSF47323">
    <property type="entry name" value="Anticodon-binding domain of a subclass of class I aminoacyl-tRNA synthetases"/>
    <property type="match status" value="1"/>
</dbReference>
<dbReference type="SUPFAM" id="SSF52374">
    <property type="entry name" value="Nucleotidylyl transferase"/>
    <property type="match status" value="1"/>
</dbReference>
<accession>B0VAU1</accession>
<sequence length="473" mass="54170">MQPFVLYNSEQRKKVEFVPRKEGHIDMYVCGMTVYDYCHIGHARVMVAFDYIIRFLRSQGWKVRYIRNITDIDDKIIKRANENGETIQQLTTRFIDAMNEDAANLGCLAPDEAPKATEYIDQMQNMIGNLVNKGAAYPASNGDVYFEVTKFEKYGRLSGRKLDDMQAGASERIDVEVEKKHPFDFVLWKHAKENEPSWASPWGNGRPGWHIECSAMSTCCLGNHFDIHGGGSDLMFPHHENEIAQSEASTGEQYVNYWMHVGFINVDGEKMSKSLGNFFTIRDVMEKFHPEVIRYFIVSSHYRSPVNFSDVALKEAKTSLTRFYHSFKAYQQVYGQTTTEALDQSFIERFNNAMCDDFNTAEAMAVLFELNKELNRAVKEEQADQATVLYSTLRHLTNILGLVQHNVDDFLKSDIGQDALALSDAEIEDFIQQRVDAKKAKDFAKADSIRQSLLEQGVVLEDTRQGTVWRRAD</sequence>
<gene>
    <name evidence="1" type="primary">cysS</name>
    <name type="ordered locus">ABAYE2493</name>
</gene>
<keyword id="KW-0030">Aminoacyl-tRNA synthetase</keyword>
<keyword id="KW-0067">ATP-binding</keyword>
<keyword id="KW-0963">Cytoplasm</keyword>
<keyword id="KW-0436">Ligase</keyword>
<keyword id="KW-0479">Metal-binding</keyword>
<keyword id="KW-0547">Nucleotide-binding</keyword>
<keyword id="KW-0648">Protein biosynthesis</keyword>
<keyword id="KW-0862">Zinc</keyword>
<name>SYC_ACIBY</name>